<reference key="1">
    <citation type="journal article" date="2011" name="Stand. Genomic Sci.">
        <title>Complete genome sequence of Rhodospirillum rubrum type strain (S1).</title>
        <authorList>
            <person name="Munk A.C."/>
            <person name="Copeland A."/>
            <person name="Lucas S."/>
            <person name="Lapidus A."/>
            <person name="Del Rio T.G."/>
            <person name="Barry K."/>
            <person name="Detter J.C."/>
            <person name="Hammon N."/>
            <person name="Israni S."/>
            <person name="Pitluck S."/>
            <person name="Brettin T."/>
            <person name="Bruce D."/>
            <person name="Han C."/>
            <person name="Tapia R."/>
            <person name="Gilna P."/>
            <person name="Schmutz J."/>
            <person name="Larimer F."/>
            <person name="Land M."/>
            <person name="Kyrpides N.C."/>
            <person name="Mavromatis K."/>
            <person name="Richardson P."/>
            <person name="Rohde M."/>
            <person name="Goeker M."/>
            <person name="Klenk H.P."/>
            <person name="Zhang Y."/>
            <person name="Roberts G.P."/>
            <person name="Reslewic S."/>
            <person name="Schwartz D.C."/>
        </authorList>
    </citation>
    <scope>NUCLEOTIDE SEQUENCE [LARGE SCALE GENOMIC DNA]</scope>
    <source>
        <strain>ATCC 11170 / ATH 1.1.1 / DSM 467 / LMG 4362 / NCIMB 8255 / S1</strain>
    </source>
</reference>
<proteinExistence type="inferred from homology"/>
<feature type="chain" id="PRO_0000230260" description="Glycogen synthase">
    <location>
        <begin position="1"/>
        <end position="485"/>
    </location>
</feature>
<feature type="binding site" evidence="1">
    <location>
        <position position="15"/>
    </location>
    <ligand>
        <name>ADP-alpha-D-glucose</name>
        <dbReference type="ChEBI" id="CHEBI:57498"/>
    </ligand>
</feature>
<protein>
    <recommendedName>
        <fullName evidence="1">Glycogen synthase</fullName>
        <ecNumber evidence="1">2.4.1.21</ecNumber>
    </recommendedName>
    <alternativeName>
        <fullName evidence="1">Starch [bacterial glycogen] synthase</fullName>
    </alternativeName>
</protein>
<name>GLGA_RHORT</name>
<keyword id="KW-0320">Glycogen biosynthesis</keyword>
<keyword id="KW-0328">Glycosyltransferase</keyword>
<keyword id="KW-1185">Reference proteome</keyword>
<keyword id="KW-0808">Transferase</keyword>
<sequence>MKVLFVTSEAYPLVKTGGLGDVAGALPAALRDIGVDARILLPAYPDAMRRARLTGKTVPLGNPLGVGETRLLEGTMPDTGCPLWLLDCPAMYERTGGPYMMYSGVDWPDNFRRFALLSKVAAMIGTAGDLMDWRPDVLHGHDWQTGLVPAYLNAWGARRPPFLFSIHNMEYRGLFGPEILDLIGLPRSQFSINGLEFHGLVSTLKAGIVYAQAVATVSPSYAAEIKTPVGGQGLEGLLQARAGDLSGILNGIDSNAWNPQTDPYLAAPIDGADPAPGKRINKDMLKRRMGLDADGDRPLFGLVSRFVAQKGIDLVVAALPGMIAGGAQVAILGAGDTGLEAALNDIVGRYPGAAAVHVGYDEHLAHLIEGAADFLLVPSRFEPCGLTQLYALRYGTIPVVRRTGGLADSVSHLDDGPNGTGIVFDHALPDALEWAIGRAMTLYRDKATLNKVRQRGMSQDFSWKRSAKEYLRVYGSMVGGDVHRP</sequence>
<dbReference type="EC" id="2.4.1.21" evidence="1"/>
<dbReference type="EMBL" id="CP000230">
    <property type="protein sequence ID" value="ABC23045.1"/>
    <property type="molecule type" value="Genomic_DNA"/>
</dbReference>
<dbReference type="RefSeq" id="WP_011389900.1">
    <property type="nucleotide sequence ID" value="NC_007643.1"/>
</dbReference>
<dbReference type="RefSeq" id="YP_427332.1">
    <property type="nucleotide sequence ID" value="NC_007643.1"/>
</dbReference>
<dbReference type="SMR" id="Q2RS50"/>
<dbReference type="STRING" id="269796.Rru_A2245"/>
<dbReference type="CAZy" id="GT5">
    <property type="family name" value="Glycosyltransferase Family 5"/>
</dbReference>
<dbReference type="EnsemblBacteria" id="ABC23045">
    <property type="protein sequence ID" value="ABC23045"/>
    <property type="gene ID" value="Rru_A2245"/>
</dbReference>
<dbReference type="KEGG" id="rru:Rru_A2245"/>
<dbReference type="PATRIC" id="fig|269796.9.peg.2343"/>
<dbReference type="eggNOG" id="COG0297">
    <property type="taxonomic scope" value="Bacteria"/>
</dbReference>
<dbReference type="HOGENOM" id="CLU_009583_18_4_5"/>
<dbReference type="PhylomeDB" id="Q2RS50"/>
<dbReference type="UniPathway" id="UPA00164"/>
<dbReference type="Proteomes" id="UP000001929">
    <property type="component" value="Chromosome"/>
</dbReference>
<dbReference type="GO" id="GO:0009011">
    <property type="term" value="F:alpha-1,4-glucan glucosyltransferase (ADP-glucose donor) activity"/>
    <property type="evidence" value="ECO:0007669"/>
    <property type="project" value="UniProtKB-UniRule"/>
</dbReference>
<dbReference type="GO" id="GO:0004373">
    <property type="term" value="F:alpha-1,4-glucan glucosyltransferase (UDP-glucose donor) activity"/>
    <property type="evidence" value="ECO:0007669"/>
    <property type="project" value="InterPro"/>
</dbReference>
<dbReference type="GO" id="GO:0005978">
    <property type="term" value="P:glycogen biosynthetic process"/>
    <property type="evidence" value="ECO:0007669"/>
    <property type="project" value="UniProtKB-UniRule"/>
</dbReference>
<dbReference type="CDD" id="cd03791">
    <property type="entry name" value="GT5_Glycogen_synthase_DULL1-like"/>
    <property type="match status" value="1"/>
</dbReference>
<dbReference type="Gene3D" id="3.40.50.2000">
    <property type="entry name" value="Glycogen Phosphorylase B"/>
    <property type="match status" value="2"/>
</dbReference>
<dbReference type="HAMAP" id="MF_00484">
    <property type="entry name" value="Glycogen_synth"/>
    <property type="match status" value="1"/>
</dbReference>
<dbReference type="InterPro" id="IPR001296">
    <property type="entry name" value="Glyco_trans_1"/>
</dbReference>
<dbReference type="InterPro" id="IPR011835">
    <property type="entry name" value="GS/SS"/>
</dbReference>
<dbReference type="InterPro" id="IPR013534">
    <property type="entry name" value="Starch_synth_cat_dom"/>
</dbReference>
<dbReference type="NCBIfam" id="TIGR02095">
    <property type="entry name" value="glgA"/>
    <property type="match status" value="1"/>
</dbReference>
<dbReference type="NCBIfam" id="NF001899">
    <property type="entry name" value="PRK00654.1-2"/>
    <property type="match status" value="1"/>
</dbReference>
<dbReference type="PANTHER" id="PTHR45825:SF11">
    <property type="entry name" value="ALPHA AMYLASE DOMAIN-CONTAINING PROTEIN"/>
    <property type="match status" value="1"/>
</dbReference>
<dbReference type="PANTHER" id="PTHR45825">
    <property type="entry name" value="GRANULE-BOUND STARCH SYNTHASE 1, CHLOROPLASTIC/AMYLOPLASTIC"/>
    <property type="match status" value="1"/>
</dbReference>
<dbReference type="Pfam" id="PF08323">
    <property type="entry name" value="Glyco_transf_5"/>
    <property type="match status" value="1"/>
</dbReference>
<dbReference type="Pfam" id="PF00534">
    <property type="entry name" value="Glycos_transf_1"/>
    <property type="match status" value="1"/>
</dbReference>
<dbReference type="SUPFAM" id="SSF53756">
    <property type="entry name" value="UDP-Glycosyltransferase/glycogen phosphorylase"/>
    <property type="match status" value="1"/>
</dbReference>
<comment type="function">
    <text evidence="1">Synthesizes alpha-1,4-glucan chains using ADP-glucose.</text>
</comment>
<comment type="catalytic activity">
    <reaction evidence="1">
        <text>[(1-&gt;4)-alpha-D-glucosyl](n) + ADP-alpha-D-glucose = [(1-&gt;4)-alpha-D-glucosyl](n+1) + ADP + H(+)</text>
        <dbReference type="Rhea" id="RHEA:18189"/>
        <dbReference type="Rhea" id="RHEA-COMP:9584"/>
        <dbReference type="Rhea" id="RHEA-COMP:9587"/>
        <dbReference type="ChEBI" id="CHEBI:15378"/>
        <dbReference type="ChEBI" id="CHEBI:15444"/>
        <dbReference type="ChEBI" id="CHEBI:57498"/>
        <dbReference type="ChEBI" id="CHEBI:456216"/>
        <dbReference type="EC" id="2.4.1.21"/>
    </reaction>
</comment>
<comment type="pathway">
    <text evidence="1">Glycan biosynthesis; glycogen biosynthesis.</text>
</comment>
<comment type="similarity">
    <text evidence="1">Belongs to the glycosyltransferase 1 family. Bacterial/plant glycogen synthase subfamily.</text>
</comment>
<gene>
    <name evidence="1" type="primary">glgA</name>
    <name type="ordered locus">Rru_A2245</name>
</gene>
<accession>Q2RS50</accession>
<organism>
    <name type="scientific">Rhodospirillum rubrum (strain ATCC 11170 / ATH 1.1.1 / DSM 467 / LMG 4362 / NCIMB 8255 / S1)</name>
    <dbReference type="NCBI Taxonomy" id="269796"/>
    <lineage>
        <taxon>Bacteria</taxon>
        <taxon>Pseudomonadati</taxon>
        <taxon>Pseudomonadota</taxon>
        <taxon>Alphaproteobacteria</taxon>
        <taxon>Rhodospirillales</taxon>
        <taxon>Rhodospirillaceae</taxon>
        <taxon>Rhodospirillum</taxon>
    </lineage>
</organism>
<evidence type="ECO:0000255" key="1">
    <source>
        <dbReference type="HAMAP-Rule" id="MF_00484"/>
    </source>
</evidence>